<gene>
    <name evidence="1" type="primary">bioB</name>
    <name type="ordered locus">plu1485</name>
</gene>
<comment type="function">
    <text evidence="1">Catalyzes the conversion of dethiobiotin (DTB) to biotin by the insertion of a sulfur atom into dethiobiotin via a radical-based mechanism.</text>
</comment>
<comment type="catalytic activity">
    <reaction evidence="1">
        <text>(4R,5S)-dethiobiotin + (sulfur carrier)-SH + 2 reduced [2Fe-2S]-[ferredoxin] + 2 S-adenosyl-L-methionine = (sulfur carrier)-H + biotin + 2 5'-deoxyadenosine + 2 L-methionine + 2 oxidized [2Fe-2S]-[ferredoxin]</text>
        <dbReference type="Rhea" id="RHEA:22060"/>
        <dbReference type="Rhea" id="RHEA-COMP:10000"/>
        <dbReference type="Rhea" id="RHEA-COMP:10001"/>
        <dbReference type="Rhea" id="RHEA-COMP:14737"/>
        <dbReference type="Rhea" id="RHEA-COMP:14739"/>
        <dbReference type="ChEBI" id="CHEBI:17319"/>
        <dbReference type="ChEBI" id="CHEBI:29917"/>
        <dbReference type="ChEBI" id="CHEBI:33737"/>
        <dbReference type="ChEBI" id="CHEBI:33738"/>
        <dbReference type="ChEBI" id="CHEBI:57586"/>
        <dbReference type="ChEBI" id="CHEBI:57844"/>
        <dbReference type="ChEBI" id="CHEBI:59789"/>
        <dbReference type="ChEBI" id="CHEBI:64428"/>
        <dbReference type="ChEBI" id="CHEBI:149473"/>
        <dbReference type="EC" id="2.8.1.6"/>
    </reaction>
</comment>
<comment type="cofactor">
    <cofactor evidence="1">
        <name>[4Fe-4S] cluster</name>
        <dbReference type="ChEBI" id="CHEBI:49883"/>
    </cofactor>
    <text evidence="1">Binds 1 [4Fe-4S] cluster. The cluster is coordinated with 3 cysteines and an exchangeable S-adenosyl-L-methionine.</text>
</comment>
<comment type="cofactor">
    <cofactor evidence="1">
        <name>[2Fe-2S] cluster</name>
        <dbReference type="ChEBI" id="CHEBI:190135"/>
    </cofactor>
    <text evidence="1">Binds 1 [2Fe-2S] cluster. The cluster is coordinated with 3 cysteines and 1 arginine.</text>
</comment>
<comment type="pathway">
    <text evidence="1">Cofactor biosynthesis; biotin biosynthesis; biotin from 7,8-diaminononanoate: step 2/2.</text>
</comment>
<comment type="subunit">
    <text evidence="1">Homodimer.</text>
</comment>
<comment type="similarity">
    <text evidence="1">Belongs to the radical SAM superfamily. Biotin synthase family.</text>
</comment>
<keyword id="KW-0001">2Fe-2S</keyword>
<keyword id="KW-0004">4Fe-4S</keyword>
<keyword id="KW-0093">Biotin biosynthesis</keyword>
<keyword id="KW-0408">Iron</keyword>
<keyword id="KW-0411">Iron-sulfur</keyword>
<keyword id="KW-0479">Metal-binding</keyword>
<keyword id="KW-1185">Reference proteome</keyword>
<keyword id="KW-0949">S-adenosyl-L-methionine</keyword>
<keyword id="KW-0808">Transferase</keyword>
<protein>
    <recommendedName>
        <fullName evidence="1">Biotin synthase</fullName>
        <ecNumber evidence="1">2.8.1.6</ecNumber>
    </recommendedName>
</protein>
<feature type="chain" id="PRO_0000381526" description="Biotin synthase">
    <location>
        <begin position="1"/>
        <end position="345"/>
    </location>
</feature>
<feature type="domain" description="Radical SAM core" evidence="2">
    <location>
        <begin position="38"/>
        <end position="256"/>
    </location>
</feature>
<feature type="binding site" evidence="1">
    <location>
        <position position="53"/>
    </location>
    <ligand>
        <name>[4Fe-4S] cluster</name>
        <dbReference type="ChEBI" id="CHEBI:49883"/>
        <note>4Fe-4S-S-AdoMet</note>
    </ligand>
</feature>
<feature type="binding site" evidence="1">
    <location>
        <position position="57"/>
    </location>
    <ligand>
        <name>[4Fe-4S] cluster</name>
        <dbReference type="ChEBI" id="CHEBI:49883"/>
        <note>4Fe-4S-S-AdoMet</note>
    </ligand>
</feature>
<feature type="binding site" evidence="1">
    <location>
        <position position="60"/>
    </location>
    <ligand>
        <name>[4Fe-4S] cluster</name>
        <dbReference type="ChEBI" id="CHEBI:49883"/>
        <note>4Fe-4S-S-AdoMet</note>
    </ligand>
</feature>
<feature type="binding site" evidence="1">
    <location>
        <position position="97"/>
    </location>
    <ligand>
        <name>[2Fe-2S] cluster</name>
        <dbReference type="ChEBI" id="CHEBI:190135"/>
    </ligand>
</feature>
<feature type="binding site" evidence="1">
    <location>
        <position position="128"/>
    </location>
    <ligand>
        <name>[2Fe-2S] cluster</name>
        <dbReference type="ChEBI" id="CHEBI:190135"/>
    </ligand>
</feature>
<feature type="binding site" evidence="1">
    <location>
        <position position="188"/>
    </location>
    <ligand>
        <name>[2Fe-2S] cluster</name>
        <dbReference type="ChEBI" id="CHEBI:190135"/>
    </ligand>
</feature>
<feature type="binding site" evidence="1">
    <location>
        <position position="260"/>
    </location>
    <ligand>
        <name>[2Fe-2S] cluster</name>
        <dbReference type="ChEBI" id="CHEBI:190135"/>
    </ligand>
</feature>
<evidence type="ECO:0000255" key="1">
    <source>
        <dbReference type="HAMAP-Rule" id="MF_01694"/>
    </source>
</evidence>
<evidence type="ECO:0000255" key="2">
    <source>
        <dbReference type="PROSITE-ProRule" id="PRU01266"/>
    </source>
</evidence>
<accession>Q7N6Q7</accession>
<sequence>MIERKQWTIKQAQELFDKPFFELLFQAQQVHRIYFDPQQVQVSTLLSIKTGACPEDCKYCPQSSRYKTGLEKERLMEVEQVIDSARKAKNAGSTRFCMGAAWKNPHERDMPYLEKMVKEVKALGMETCMTLGMLNGLQAQRLADAGLDYYNHNLDTSPEFYGNIITTRTYQDRLDTLDKVREAGIKVCSGGIVGLGEAIRDRAALLVQLANLPKPPESVPINMLVKVKGTPLAENEDVDPFDFIRTIAVARIMMPSSHVRLSAGREQMNEQTQAMCFMAGANSIFYGCKLLTTPNPAEDKDLQLFRKLGINLQQTQTAFGDNQQQQHLAEAIINADNEQFYNAAL</sequence>
<dbReference type="EC" id="2.8.1.6" evidence="1"/>
<dbReference type="EMBL" id="BX571864">
    <property type="protein sequence ID" value="CAE13778.1"/>
    <property type="molecule type" value="Genomic_DNA"/>
</dbReference>
<dbReference type="RefSeq" id="WP_011145787.1">
    <property type="nucleotide sequence ID" value="NC_005126.1"/>
</dbReference>
<dbReference type="SMR" id="Q7N6Q7"/>
<dbReference type="STRING" id="243265.plu1485"/>
<dbReference type="GeneID" id="48847776"/>
<dbReference type="KEGG" id="plu:plu1485"/>
<dbReference type="eggNOG" id="COG0502">
    <property type="taxonomic scope" value="Bacteria"/>
</dbReference>
<dbReference type="HOGENOM" id="CLU_033172_1_2_6"/>
<dbReference type="OrthoDB" id="9786826at2"/>
<dbReference type="UniPathway" id="UPA00078">
    <property type="reaction ID" value="UER00162"/>
</dbReference>
<dbReference type="Proteomes" id="UP000002514">
    <property type="component" value="Chromosome"/>
</dbReference>
<dbReference type="GO" id="GO:0051537">
    <property type="term" value="F:2 iron, 2 sulfur cluster binding"/>
    <property type="evidence" value="ECO:0007669"/>
    <property type="project" value="UniProtKB-KW"/>
</dbReference>
<dbReference type="GO" id="GO:0051539">
    <property type="term" value="F:4 iron, 4 sulfur cluster binding"/>
    <property type="evidence" value="ECO:0007669"/>
    <property type="project" value="UniProtKB-KW"/>
</dbReference>
<dbReference type="GO" id="GO:0004076">
    <property type="term" value="F:biotin synthase activity"/>
    <property type="evidence" value="ECO:0007669"/>
    <property type="project" value="UniProtKB-UniRule"/>
</dbReference>
<dbReference type="GO" id="GO:0005506">
    <property type="term" value="F:iron ion binding"/>
    <property type="evidence" value="ECO:0007669"/>
    <property type="project" value="UniProtKB-UniRule"/>
</dbReference>
<dbReference type="GO" id="GO:0009102">
    <property type="term" value="P:biotin biosynthetic process"/>
    <property type="evidence" value="ECO:0007669"/>
    <property type="project" value="UniProtKB-UniRule"/>
</dbReference>
<dbReference type="CDD" id="cd01335">
    <property type="entry name" value="Radical_SAM"/>
    <property type="match status" value="1"/>
</dbReference>
<dbReference type="FunFam" id="3.20.20.70:FF:000011">
    <property type="entry name" value="Biotin synthase"/>
    <property type="match status" value="1"/>
</dbReference>
<dbReference type="Gene3D" id="3.20.20.70">
    <property type="entry name" value="Aldolase class I"/>
    <property type="match status" value="1"/>
</dbReference>
<dbReference type="HAMAP" id="MF_01694">
    <property type="entry name" value="BioB"/>
    <property type="match status" value="1"/>
</dbReference>
<dbReference type="InterPro" id="IPR013785">
    <property type="entry name" value="Aldolase_TIM"/>
</dbReference>
<dbReference type="InterPro" id="IPR010722">
    <property type="entry name" value="BATS_dom"/>
</dbReference>
<dbReference type="InterPro" id="IPR002684">
    <property type="entry name" value="Biotin_synth/BioAB"/>
</dbReference>
<dbReference type="InterPro" id="IPR024177">
    <property type="entry name" value="Biotin_synthase"/>
</dbReference>
<dbReference type="InterPro" id="IPR006638">
    <property type="entry name" value="Elp3/MiaA/NifB-like_rSAM"/>
</dbReference>
<dbReference type="InterPro" id="IPR007197">
    <property type="entry name" value="rSAM"/>
</dbReference>
<dbReference type="NCBIfam" id="TIGR00433">
    <property type="entry name" value="bioB"/>
    <property type="match status" value="1"/>
</dbReference>
<dbReference type="PANTHER" id="PTHR22976">
    <property type="entry name" value="BIOTIN SYNTHASE"/>
    <property type="match status" value="1"/>
</dbReference>
<dbReference type="PANTHER" id="PTHR22976:SF2">
    <property type="entry name" value="BIOTIN SYNTHASE, MITOCHONDRIAL"/>
    <property type="match status" value="1"/>
</dbReference>
<dbReference type="Pfam" id="PF06968">
    <property type="entry name" value="BATS"/>
    <property type="match status" value="1"/>
</dbReference>
<dbReference type="Pfam" id="PF04055">
    <property type="entry name" value="Radical_SAM"/>
    <property type="match status" value="1"/>
</dbReference>
<dbReference type="PIRSF" id="PIRSF001619">
    <property type="entry name" value="Biotin_synth"/>
    <property type="match status" value="1"/>
</dbReference>
<dbReference type="SFLD" id="SFLDF00272">
    <property type="entry name" value="biotin_synthase"/>
    <property type="match status" value="1"/>
</dbReference>
<dbReference type="SFLD" id="SFLDS00029">
    <property type="entry name" value="Radical_SAM"/>
    <property type="match status" value="1"/>
</dbReference>
<dbReference type="SMART" id="SM00876">
    <property type="entry name" value="BATS"/>
    <property type="match status" value="1"/>
</dbReference>
<dbReference type="SMART" id="SM00729">
    <property type="entry name" value="Elp3"/>
    <property type="match status" value="1"/>
</dbReference>
<dbReference type="SUPFAM" id="SSF102114">
    <property type="entry name" value="Radical SAM enzymes"/>
    <property type="match status" value="1"/>
</dbReference>
<dbReference type="PROSITE" id="PS51918">
    <property type="entry name" value="RADICAL_SAM"/>
    <property type="match status" value="1"/>
</dbReference>
<proteinExistence type="inferred from homology"/>
<reference key="1">
    <citation type="journal article" date="2003" name="Nat. Biotechnol.">
        <title>The genome sequence of the entomopathogenic bacterium Photorhabdus luminescens.</title>
        <authorList>
            <person name="Duchaud E."/>
            <person name="Rusniok C."/>
            <person name="Frangeul L."/>
            <person name="Buchrieser C."/>
            <person name="Givaudan A."/>
            <person name="Taourit S."/>
            <person name="Bocs S."/>
            <person name="Boursaux-Eude C."/>
            <person name="Chandler M."/>
            <person name="Charles J.-F."/>
            <person name="Dassa E."/>
            <person name="Derose R."/>
            <person name="Derzelle S."/>
            <person name="Freyssinet G."/>
            <person name="Gaudriault S."/>
            <person name="Medigue C."/>
            <person name="Lanois A."/>
            <person name="Powell K."/>
            <person name="Siguier P."/>
            <person name="Vincent R."/>
            <person name="Wingate V."/>
            <person name="Zouine M."/>
            <person name="Glaser P."/>
            <person name="Boemare N."/>
            <person name="Danchin A."/>
            <person name="Kunst F."/>
        </authorList>
    </citation>
    <scope>NUCLEOTIDE SEQUENCE [LARGE SCALE GENOMIC DNA]</scope>
    <source>
        <strain>DSM 15139 / CIP 105565 / TT01</strain>
    </source>
</reference>
<organism>
    <name type="scientific">Photorhabdus laumondii subsp. laumondii (strain DSM 15139 / CIP 105565 / TT01)</name>
    <name type="common">Photorhabdus luminescens subsp. laumondii</name>
    <dbReference type="NCBI Taxonomy" id="243265"/>
    <lineage>
        <taxon>Bacteria</taxon>
        <taxon>Pseudomonadati</taxon>
        <taxon>Pseudomonadota</taxon>
        <taxon>Gammaproteobacteria</taxon>
        <taxon>Enterobacterales</taxon>
        <taxon>Morganellaceae</taxon>
        <taxon>Photorhabdus</taxon>
    </lineage>
</organism>
<name>BIOB_PHOLL</name>